<sequence>MDALRKNIGMDLIGGAHDMDRFDSLHETAAFLPIIQGPENKMICAFINPETKGILKVYPEHLGFFLEKIGTEAELRAMVGIATAVMDSVDSEVVYTPDDSVAVSQLPTPELLVEARRLLDVLAASVEKKRVKIGGGSTGVSYAVVLARLETRVSWVPHNAFLELAQLYTTVYRNFYGLGDFLALVATSLHLDNIWPLAVTRKITTPLFVDTVKQEEVEMEVNGEQMVLSQKYVTFKAFKGFVLETDSEGGLSESDAADDPFLAESITLKLEKNQMTKMMDRDLMLKTAILSIRDENPRIKRAKNNIKLVDEFFMGIDRMAQPAFVKLAKKLMGSAHMVAILQSTLRSSILSWGLNDVAGTNTTMSDPELLNKLRRQTYVRMLADLSLLKVSRTPMGMFSVKDVSVKLDDRYWQGKKDATADQDKILQFYNQQGPTTFIEWLNKIGIESLEIPEKREPGKVFPVNCLWSVYNSTEFTEFGTLTVNSTGKGATQSGTKHNSCSDLSDLGKFRYVVRATPGTPPASILGLMHLIRTALFGVVCVSIHMAGEFFAEENLDLELNSNNKAATTVMRKMGDQFFRGYFFNLGNDDKKVKSSFDMIFRVFGAKGRALLSRKDGNGPNLRRSNAFNGLEWLRKKVKARPELANNMRRAIRNLLERYDVQAMILDQAETRSLYYLRPMFMTPFKTELQASTIISKKADFNNAPTLLHVNLTSVTISPTNTHFTLPLAPIFNKWDQHKVYGIILEMNTNVYSQATRGTWTATGGGQFFGADVGIDSLMSSLLSQVSEDEPVTSELINMFSLDKVRYDTVVERLKALSRYEETEPPVYGEDLVLSRELEQSDELDCGTENNEPLVLQPFEKDCSRKRAATTLSELWAGPSTKISRIEGDDED</sequence>
<reference key="1">
    <citation type="journal article" date="1992" name="Virology">
        <title>Channel catfish virus: a new type of herpesvirus.</title>
        <authorList>
            <person name="Davison A.J."/>
        </authorList>
    </citation>
    <scope>NUCLEOTIDE SEQUENCE [LARGE SCALE GENOMIC DNA]</scope>
</reference>
<organism>
    <name type="scientific">Ictalurid herpesvirus 1 (strain Auburn)</name>
    <name type="common">IcHV-1</name>
    <name type="synonym">Channel catfish herpesvirus</name>
    <dbReference type="NCBI Taxonomy" id="766178"/>
    <lineage>
        <taxon>Viruses</taxon>
        <taxon>Duplodnaviria</taxon>
        <taxon>Heunggongvirae</taxon>
        <taxon>Peploviricota</taxon>
        <taxon>Herviviricetes</taxon>
        <taxon>Herpesvirales</taxon>
        <taxon>Alloherpesviridae</taxon>
        <taxon>Ictavirus</taxon>
        <taxon>Ictavirus ictaluridallo1</taxon>
        <taxon>Ictalurid herpesvirus 1</taxon>
    </lineage>
</organism>
<name>VG43_ICHVA</name>
<protein>
    <recommendedName>
        <fullName>Uncharacterized protein ORF43</fullName>
    </recommendedName>
</protein>
<feature type="chain" id="PRO_0000222125" description="Uncharacterized protein ORF43">
    <location>
        <begin position="1"/>
        <end position="891"/>
    </location>
</feature>
<dbReference type="EMBL" id="M75136">
    <property type="protein sequence ID" value="AAA88146.1"/>
    <property type="molecule type" value="Genomic_DNA"/>
</dbReference>
<dbReference type="PIR" id="H36790">
    <property type="entry name" value="H36790"/>
</dbReference>
<dbReference type="RefSeq" id="NP_041134.1">
    <property type="nucleotide sequence ID" value="NC_001493.2"/>
</dbReference>
<dbReference type="SMR" id="Q00161"/>
<dbReference type="GeneID" id="1488454"/>
<dbReference type="KEGG" id="vg:1488454"/>
<dbReference type="Proteomes" id="UP000007643">
    <property type="component" value="Segment"/>
</dbReference>
<organismHost>
    <name type="scientific">Ictaluridae</name>
    <name type="common">bullhead catfishes</name>
    <dbReference type="NCBI Taxonomy" id="7996"/>
</organismHost>
<accession>Q00161</accession>
<keyword id="KW-1185">Reference proteome</keyword>
<proteinExistence type="predicted"/>
<gene>
    <name type="primary">ORF43</name>
</gene>